<sequence length="208" mass="22759">MTDMLTGTRRARVERKTKESDIVVDLDLDGTGIVDIRTGVPFFDHMLTSLGSHASFDLTVHATGDIEIEGHHTVEDTAIVLGQALGQALGDKKGIRRFGDAFIPMDETLAHAAVDVSGRPYFVHTGEPDYMVEFTIAGSSAPYHTVINRHVFESLAFNARIALHVRTIYGRDPHHITEAQYKAVARALRQAVELDPRVTGVPSTKGSL</sequence>
<accession>A1UHK6</accession>
<evidence type="ECO:0000255" key="1">
    <source>
        <dbReference type="HAMAP-Rule" id="MF_00076"/>
    </source>
</evidence>
<comment type="catalytic activity">
    <reaction evidence="1">
        <text>D-erythro-1-(imidazol-4-yl)glycerol 3-phosphate = 3-(imidazol-4-yl)-2-oxopropyl phosphate + H2O</text>
        <dbReference type="Rhea" id="RHEA:11040"/>
        <dbReference type="ChEBI" id="CHEBI:15377"/>
        <dbReference type="ChEBI" id="CHEBI:57766"/>
        <dbReference type="ChEBI" id="CHEBI:58278"/>
        <dbReference type="EC" id="4.2.1.19"/>
    </reaction>
</comment>
<comment type="pathway">
    <text evidence="1">Amino-acid biosynthesis; L-histidine biosynthesis; L-histidine from 5-phospho-alpha-D-ribose 1-diphosphate: step 6/9.</text>
</comment>
<comment type="subcellular location">
    <subcellularLocation>
        <location evidence="1">Cytoplasm</location>
    </subcellularLocation>
</comment>
<comment type="similarity">
    <text evidence="1">Belongs to the imidazoleglycerol-phosphate dehydratase family.</text>
</comment>
<feature type="chain" id="PRO_1000010303" description="Imidazoleglycerol-phosphate dehydratase">
    <location>
        <begin position="1"/>
        <end position="208"/>
    </location>
</feature>
<protein>
    <recommendedName>
        <fullName evidence="1">Imidazoleglycerol-phosphate dehydratase</fullName>
        <shortName evidence="1">IGPD</shortName>
        <ecNumber evidence="1">4.2.1.19</ecNumber>
    </recommendedName>
</protein>
<dbReference type="EC" id="4.2.1.19" evidence="1"/>
<dbReference type="EMBL" id="CP000518">
    <property type="protein sequence ID" value="ABL92314.1"/>
    <property type="molecule type" value="Genomic_DNA"/>
</dbReference>
<dbReference type="SMR" id="A1UHK6"/>
<dbReference type="STRING" id="189918.Mkms_3120"/>
<dbReference type="KEGG" id="mkm:Mkms_3120"/>
<dbReference type="HOGENOM" id="CLU_044308_3_0_11"/>
<dbReference type="OrthoDB" id="9790411at2"/>
<dbReference type="UniPathway" id="UPA00031">
    <property type="reaction ID" value="UER00011"/>
</dbReference>
<dbReference type="GO" id="GO:0005737">
    <property type="term" value="C:cytoplasm"/>
    <property type="evidence" value="ECO:0007669"/>
    <property type="project" value="UniProtKB-SubCell"/>
</dbReference>
<dbReference type="GO" id="GO:0004424">
    <property type="term" value="F:imidazoleglycerol-phosphate dehydratase activity"/>
    <property type="evidence" value="ECO:0007669"/>
    <property type="project" value="UniProtKB-UniRule"/>
</dbReference>
<dbReference type="GO" id="GO:0000105">
    <property type="term" value="P:L-histidine biosynthetic process"/>
    <property type="evidence" value="ECO:0007669"/>
    <property type="project" value="UniProtKB-UniRule"/>
</dbReference>
<dbReference type="CDD" id="cd07914">
    <property type="entry name" value="IGPD"/>
    <property type="match status" value="1"/>
</dbReference>
<dbReference type="FunFam" id="3.30.230.40:FF:000001">
    <property type="entry name" value="Imidazoleglycerol-phosphate dehydratase HisB"/>
    <property type="match status" value="1"/>
</dbReference>
<dbReference type="FunFam" id="3.30.230.40:FF:000003">
    <property type="entry name" value="Imidazoleglycerol-phosphate dehydratase HisB"/>
    <property type="match status" value="1"/>
</dbReference>
<dbReference type="Gene3D" id="3.30.230.40">
    <property type="entry name" value="Imidazole glycerol phosphate dehydratase, domain 1"/>
    <property type="match status" value="2"/>
</dbReference>
<dbReference type="HAMAP" id="MF_00076">
    <property type="entry name" value="HisB"/>
    <property type="match status" value="1"/>
</dbReference>
<dbReference type="InterPro" id="IPR038494">
    <property type="entry name" value="IGPD_sf"/>
</dbReference>
<dbReference type="InterPro" id="IPR000807">
    <property type="entry name" value="ImidazoleglycerolP_deHydtase"/>
</dbReference>
<dbReference type="InterPro" id="IPR020565">
    <property type="entry name" value="ImidazoleglycerP_deHydtase_CS"/>
</dbReference>
<dbReference type="InterPro" id="IPR020568">
    <property type="entry name" value="Ribosomal_Su5_D2-typ_SF"/>
</dbReference>
<dbReference type="NCBIfam" id="NF002110">
    <property type="entry name" value="PRK00951.1-6"/>
    <property type="match status" value="1"/>
</dbReference>
<dbReference type="NCBIfam" id="NF002111">
    <property type="entry name" value="PRK00951.2-1"/>
    <property type="match status" value="1"/>
</dbReference>
<dbReference type="NCBIfam" id="NF002114">
    <property type="entry name" value="PRK00951.2-4"/>
    <property type="match status" value="1"/>
</dbReference>
<dbReference type="PANTHER" id="PTHR23133:SF2">
    <property type="entry name" value="IMIDAZOLEGLYCEROL-PHOSPHATE DEHYDRATASE"/>
    <property type="match status" value="1"/>
</dbReference>
<dbReference type="PANTHER" id="PTHR23133">
    <property type="entry name" value="IMIDAZOLEGLYCEROL-PHOSPHATE DEHYDRATASE HIS7"/>
    <property type="match status" value="1"/>
</dbReference>
<dbReference type="Pfam" id="PF00475">
    <property type="entry name" value="IGPD"/>
    <property type="match status" value="1"/>
</dbReference>
<dbReference type="SUPFAM" id="SSF54211">
    <property type="entry name" value="Ribosomal protein S5 domain 2-like"/>
    <property type="match status" value="2"/>
</dbReference>
<dbReference type="PROSITE" id="PS00954">
    <property type="entry name" value="IGP_DEHYDRATASE_1"/>
    <property type="match status" value="1"/>
</dbReference>
<dbReference type="PROSITE" id="PS00955">
    <property type="entry name" value="IGP_DEHYDRATASE_2"/>
    <property type="match status" value="1"/>
</dbReference>
<reference key="1">
    <citation type="submission" date="2006-12" db="EMBL/GenBank/DDBJ databases">
        <title>Complete sequence of chromosome of Mycobacterium sp. KMS.</title>
        <authorList>
            <consortium name="US DOE Joint Genome Institute"/>
            <person name="Copeland A."/>
            <person name="Lucas S."/>
            <person name="Lapidus A."/>
            <person name="Barry K."/>
            <person name="Detter J.C."/>
            <person name="Glavina del Rio T."/>
            <person name="Hammon N."/>
            <person name="Israni S."/>
            <person name="Dalin E."/>
            <person name="Tice H."/>
            <person name="Pitluck S."/>
            <person name="Kiss H."/>
            <person name="Brettin T."/>
            <person name="Bruce D."/>
            <person name="Han C."/>
            <person name="Tapia R."/>
            <person name="Gilna P."/>
            <person name="Schmutz J."/>
            <person name="Larimer F."/>
            <person name="Land M."/>
            <person name="Hauser L."/>
            <person name="Kyrpides N."/>
            <person name="Mikhailova N."/>
            <person name="Miller C.D."/>
            <person name="Richardson P."/>
        </authorList>
    </citation>
    <scope>NUCLEOTIDE SEQUENCE [LARGE SCALE GENOMIC DNA]</scope>
    <source>
        <strain>KMS</strain>
    </source>
</reference>
<proteinExistence type="inferred from homology"/>
<keyword id="KW-0028">Amino-acid biosynthesis</keyword>
<keyword id="KW-0963">Cytoplasm</keyword>
<keyword id="KW-0368">Histidine biosynthesis</keyword>
<keyword id="KW-0456">Lyase</keyword>
<name>HIS7_MYCSK</name>
<organism>
    <name type="scientific">Mycobacterium sp. (strain KMS)</name>
    <dbReference type="NCBI Taxonomy" id="189918"/>
    <lineage>
        <taxon>Bacteria</taxon>
        <taxon>Bacillati</taxon>
        <taxon>Actinomycetota</taxon>
        <taxon>Actinomycetes</taxon>
        <taxon>Mycobacteriales</taxon>
        <taxon>Mycobacteriaceae</taxon>
        <taxon>Mycobacterium</taxon>
    </lineage>
</organism>
<gene>
    <name evidence="1" type="primary">hisB</name>
    <name type="ordered locus">Mkms_3120</name>
</gene>